<name>PENB_PENTH</name>
<protein>
    <recommendedName>
        <fullName evidence="7">Cytochrome P450 monooxygenase penB</fullName>
        <ecNumber evidence="5">1.-.-.-</ecNumber>
    </recommendedName>
    <alternativeName>
        <fullName evidence="7">Penigequinolones biosynthesis cluster protein B</fullName>
    </alternativeName>
</protein>
<accession>A0A1B2CTB6</accession>
<comment type="function">
    <text evidence="1 3 4 5 6 9">Cytochrome P450 monooxygenase; part of the gene cluster that mediates the biosynthesis of penigequinolones, potent insecticidal alkaloids that contain a highly modified 10-carbon prenyl group (PubMed:25859931). The first stage is catalyzed by the nonribosomal peptide synthetase penN that condenses anthranilic acid and O-methyl-L-tyrosine to produce 4'-methoxycyclopeptin (By similarity). 4'-methoxycyclopeptin is then converted to 4'-methoxydehydrocyclopeptin by the ketoglutarate-dependent dioxygenase penM through dehydrogenation to form a double bond between C-alpha and C-beta of the O-methyltyrosine side chain (By similarity). PenM also converts its first product methoxydehydrocyclopeptin to 4'-methoxycyclopenin (By similarity). The following conversion of 4'methoxycyclopenin into 4'-methoxyviridicatin is catalyzed by the cyclopenase penL (By similarity). 4'-methoxyviridicatin is the precursor of quinolone natural products, and is further converted to quinolinone B (Probable). The prenyltransferase penI then catalyzes the canonical Friedel-Crafts alkylation of quinolinone B with dimethylallyl cation to yield dimethylallyl quinolone, which is subjected to FAD-dependent dehydrogenation by the FAD-linked oxidoreductase penH to yield conjugated aryl diene (PubMed:25859931). The delta(3') double bond then serves as the site of the second alkylation with DMAPP catalyzed by the prenyltransferase penG to yield a carbenium ion intermediate, which can be attacked by H(2)O to yield a styrenyl quinolone containing a C3'-hydroxyprenyl chain, or undergo cyclization to yield yaequinolones J1 and J2 (PubMed:25859931). The conversion of the styrenyl quinolone into the tetrahydrofuran-containing yaequinolone C is performed by the FAD-dependent monooxygenase penE and involves epoxidation of the terminal C7'-C8' olefin, followed by epoxide ring opening initiated by the C3' hydroxyl group (PubMed:25859931). The predicted cysteine hydrolase penJ acts as an epoxide hydrolase that enhances the rate of the 5-exo-tet cyclization step, increasing the yield of yaequinolone C (PubMed:25859931, PubMed:28114276). PenF catalyzes the cationic rearrangement of the epoxide formed by penE (before ring opening to produce yaequinolone C) into yaequinolone D (PubMed:28114276). Finally, the short-chain dehydrogenase/reductase (SDR)-like reductase penD, catalyzes both the dehydration of yaequinolone D and the reduction of the resulting oxonium to yield penigequinolone (PubMed:28114276).</text>
</comment>
<comment type="cofactor">
    <cofactor evidence="2">
        <name>heme</name>
        <dbReference type="ChEBI" id="CHEBI:30413"/>
    </cofactor>
</comment>
<comment type="pathway">
    <text evidence="9">Secondary metabolite biosynthesis.</text>
</comment>
<comment type="pathway">
    <text evidence="9">Alkaloid biosynthesis.</text>
</comment>
<comment type="pathway">
    <text evidence="9">Mycotoxin biosynthesis.</text>
</comment>
<comment type="similarity">
    <text evidence="8">Belongs to the cytochrome P450 family.</text>
</comment>
<proteinExistence type="inferred from homology"/>
<gene>
    <name evidence="7" type="primary">penB</name>
</gene>
<reference key="1">
    <citation type="journal article" date="2015" name="J. Am. Chem. Soc.">
        <title>Tandem prenyltransferases catalyze isoprenoid elongation and complexity generation in biosynthesis of quinolone alkaloids.</title>
        <authorList>
            <person name="Zou Y."/>
            <person name="Zhan Z."/>
            <person name="Li D."/>
            <person name="Tang M."/>
            <person name="Cacho R.A."/>
            <person name="Watanabe K."/>
            <person name="Tang Y."/>
        </authorList>
    </citation>
    <scope>NUCLEOTIDE SEQUENCE [GENOMIC DNA]</scope>
    <scope>FUNCTION</scope>
    <scope>PATHWAY</scope>
    <source>
        <strain>IBT 5891 / CBS 111225</strain>
    </source>
</reference>
<reference key="2">
    <citation type="journal article" date="2017" name="Nat. Chem. Biol.">
        <title>Enzyme-catalyzed cationic epoxide rearrangements in quinolone alkaloid biosynthesis.</title>
        <authorList>
            <person name="Zou Y."/>
            <person name="Garcia-Borras M."/>
            <person name="Tang M.C."/>
            <person name="Hirayama Y."/>
            <person name="Li D.H."/>
            <person name="Li L."/>
            <person name="Watanabe K."/>
            <person name="Houk K.N."/>
            <person name="Tang Y."/>
        </authorList>
    </citation>
    <scope>FUNCTION</scope>
</reference>
<keyword id="KW-0349">Heme</keyword>
<keyword id="KW-0408">Iron</keyword>
<keyword id="KW-0479">Metal-binding</keyword>
<keyword id="KW-0503">Monooxygenase</keyword>
<keyword id="KW-0560">Oxidoreductase</keyword>
<sequence length="445" mass="50523">MHATYKSAIVRTGPNQVHVNDPEVYKNTFASASPFDKSRFFYSSVGVGDAIGAIMDRKQHHIRRTLLSPGLRANVILSYSPNLHKLVMNCADVMSGQARQAKSINLLRYTRSLTVDVIGDFTFGRPMGLVNEEDEMPELIRDLQDFSSQFHLWKHFPLLRKLVTAIPKSISRKWMPGFVQLREKSTAAVNEYLAGKQAGKPVSNTLKEGTFLDLLLNPPEKITSEAPKPSVLIDEGCAFITGGSDTTGFTMENATYLVLRHPSCLQKLRQELDEASRHIKDVFSPQHLLQLPFLSAVVKETLRLYTPAASPLPRTVPDDGVMIHGHFLPDGTILTHSLYLIHHNPNFFTNPKSFQPERWLGSSAKDLEQYYVPFSKGSRSCIGMTLAYHEIYTYLAIVFSRFDMELFNTTDRDMEWRDHFFVKRKGVLKVRIVRDRWSGEEFTSP</sequence>
<feature type="chain" id="PRO_0000455354" description="Cytochrome P450 monooxygenase penB">
    <location>
        <begin position="1"/>
        <end position="445"/>
    </location>
</feature>
<feature type="binding site" description="axial binding residue" evidence="2">
    <location>
        <position position="381"/>
    </location>
    <ligand>
        <name>heme</name>
        <dbReference type="ChEBI" id="CHEBI:30413"/>
    </ligand>
    <ligandPart>
        <name>Fe</name>
        <dbReference type="ChEBI" id="CHEBI:18248"/>
    </ligandPart>
</feature>
<organism>
    <name type="scientific">Penicillium thymicola</name>
    <dbReference type="NCBI Taxonomy" id="293382"/>
    <lineage>
        <taxon>Eukaryota</taxon>
        <taxon>Fungi</taxon>
        <taxon>Dikarya</taxon>
        <taxon>Ascomycota</taxon>
        <taxon>Pezizomycotina</taxon>
        <taxon>Eurotiomycetes</taxon>
        <taxon>Eurotiomycetidae</taxon>
        <taxon>Eurotiales</taxon>
        <taxon>Aspergillaceae</taxon>
        <taxon>Penicillium</taxon>
    </lineage>
</organism>
<evidence type="ECO:0000250" key="1">
    <source>
        <dbReference type="UniProtKB" id="C8VJQ3"/>
    </source>
</evidence>
<evidence type="ECO:0000250" key="2">
    <source>
        <dbReference type="UniProtKB" id="P04798"/>
    </source>
</evidence>
<evidence type="ECO:0000250" key="3">
    <source>
        <dbReference type="UniProtKB" id="Q5AR53"/>
    </source>
</evidence>
<evidence type="ECO:0000250" key="4">
    <source>
        <dbReference type="UniProtKB" id="Q5AR54"/>
    </source>
</evidence>
<evidence type="ECO:0000269" key="5">
    <source>
    </source>
</evidence>
<evidence type="ECO:0000269" key="6">
    <source>
    </source>
</evidence>
<evidence type="ECO:0000303" key="7">
    <source>
    </source>
</evidence>
<evidence type="ECO:0000305" key="8"/>
<evidence type="ECO:0000305" key="9">
    <source>
    </source>
</evidence>
<dbReference type="EC" id="1.-.-.-" evidence="5"/>
<dbReference type="EMBL" id="KX528209">
    <property type="protein sequence ID" value="ANY57880.1"/>
    <property type="molecule type" value="Genomic_DNA"/>
</dbReference>
<dbReference type="SMR" id="A0A1B2CTB6"/>
<dbReference type="GO" id="GO:0020037">
    <property type="term" value="F:heme binding"/>
    <property type="evidence" value="ECO:0007669"/>
    <property type="project" value="InterPro"/>
</dbReference>
<dbReference type="GO" id="GO:0005506">
    <property type="term" value="F:iron ion binding"/>
    <property type="evidence" value="ECO:0007669"/>
    <property type="project" value="InterPro"/>
</dbReference>
<dbReference type="GO" id="GO:0004497">
    <property type="term" value="F:monooxygenase activity"/>
    <property type="evidence" value="ECO:0007669"/>
    <property type="project" value="UniProtKB-KW"/>
</dbReference>
<dbReference type="GO" id="GO:0016705">
    <property type="term" value="F:oxidoreductase activity, acting on paired donors, with incorporation or reduction of molecular oxygen"/>
    <property type="evidence" value="ECO:0007669"/>
    <property type="project" value="InterPro"/>
</dbReference>
<dbReference type="GO" id="GO:0043386">
    <property type="term" value="P:mycotoxin biosynthetic process"/>
    <property type="evidence" value="ECO:0007669"/>
    <property type="project" value="UniProtKB-ARBA"/>
</dbReference>
<dbReference type="CDD" id="cd11062">
    <property type="entry name" value="CYP58-like"/>
    <property type="match status" value="1"/>
</dbReference>
<dbReference type="Gene3D" id="1.10.630.10">
    <property type="entry name" value="Cytochrome P450"/>
    <property type="match status" value="1"/>
</dbReference>
<dbReference type="InterPro" id="IPR001128">
    <property type="entry name" value="Cyt_P450"/>
</dbReference>
<dbReference type="InterPro" id="IPR017972">
    <property type="entry name" value="Cyt_P450_CS"/>
</dbReference>
<dbReference type="InterPro" id="IPR002401">
    <property type="entry name" value="Cyt_P450_E_grp-I"/>
</dbReference>
<dbReference type="InterPro" id="IPR036396">
    <property type="entry name" value="Cyt_P450_sf"/>
</dbReference>
<dbReference type="InterPro" id="IPR050121">
    <property type="entry name" value="Cytochrome_P450_monoxygenase"/>
</dbReference>
<dbReference type="PANTHER" id="PTHR24305">
    <property type="entry name" value="CYTOCHROME P450"/>
    <property type="match status" value="1"/>
</dbReference>
<dbReference type="PANTHER" id="PTHR24305:SF210">
    <property type="entry name" value="CYTOCHROME P450 MONOOXYGENASE ASQL-RELATED"/>
    <property type="match status" value="1"/>
</dbReference>
<dbReference type="Pfam" id="PF00067">
    <property type="entry name" value="p450"/>
    <property type="match status" value="1"/>
</dbReference>
<dbReference type="PRINTS" id="PR00463">
    <property type="entry name" value="EP450I"/>
</dbReference>
<dbReference type="PRINTS" id="PR00385">
    <property type="entry name" value="P450"/>
</dbReference>
<dbReference type="SUPFAM" id="SSF48264">
    <property type="entry name" value="Cytochrome P450"/>
    <property type="match status" value="1"/>
</dbReference>
<dbReference type="PROSITE" id="PS00086">
    <property type="entry name" value="CYTOCHROME_P450"/>
    <property type="match status" value="1"/>
</dbReference>